<sequence>MVIAVYPGTFDPFTRGHEDLVRRASNIFDELIVGVAQSPNKRPFFALEERIEIAREVLGHYPNVRVEGFSGLLKDFVRKNGARVIVRGLRAVSDFEYEFQMAGMNRYLLPDVETMFLTPSDQYQFISGTFVREIAVLGGDVSKFVFPSVEKWLKEKTGKTEGSGKSE</sequence>
<accession>B2UER1</accession>
<dbReference type="EC" id="2.7.7.3" evidence="1"/>
<dbReference type="EMBL" id="CP001068">
    <property type="protein sequence ID" value="ACD25407.1"/>
    <property type="molecule type" value="Genomic_DNA"/>
</dbReference>
<dbReference type="SMR" id="B2UER1"/>
<dbReference type="STRING" id="402626.Rpic_0245"/>
<dbReference type="KEGG" id="rpi:Rpic_0245"/>
<dbReference type="eggNOG" id="COG0669">
    <property type="taxonomic scope" value="Bacteria"/>
</dbReference>
<dbReference type="HOGENOM" id="CLU_100149_0_1_4"/>
<dbReference type="UniPathway" id="UPA00241">
    <property type="reaction ID" value="UER00355"/>
</dbReference>
<dbReference type="GO" id="GO:0005737">
    <property type="term" value="C:cytoplasm"/>
    <property type="evidence" value="ECO:0007669"/>
    <property type="project" value="UniProtKB-SubCell"/>
</dbReference>
<dbReference type="GO" id="GO:0005524">
    <property type="term" value="F:ATP binding"/>
    <property type="evidence" value="ECO:0007669"/>
    <property type="project" value="UniProtKB-KW"/>
</dbReference>
<dbReference type="GO" id="GO:0004595">
    <property type="term" value="F:pantetheine-phosphate adenylyltransferase activity"/>
    <property type="evidence" value="ECO:0007669"/>
    <property type="project" value="UniProtKB-UniRule"/>
</dbReference>
<dbReference type="GO" id="GO:0015937">
    <property type="term" value="P:coenzyme A biosynthetic process"/>
    <property type="evidence" value="ECO:0007669"/>
    <property type="project" value="UniProtKB-UniRule"/>
</dbReference>
<dbReference type="CDD" id="cd02163">
    <property type="entry name" value="PPAT"/>
    <property type="match status" value="1"/>
</dbReference>
<dbReference type="Gene3D" id="3.40.50.620">
    <property type="entry name" value="HUPs"/>
    <property type="match status" value="1"/>
</dbReference>
<dbReference type="HAMAP" id="MF_00151">
    <property type="entry name" value="PPAT_bact"/>
    <property type="match status" value="1"/>
</dbReference>
<dbReference type="InterPro" id="IPR004821">
    <property type="entry name" value="Cyt_trans-like"/>
</dbReference>
<dbReference type="InterPro" id="IPR001980">
    <property type="entry name" value="PPAT"/>
</dbReference>
<dbReference type="InterPro" id="IPR014729">
    <property type="entry name" value="Rossmann-like_a/b/a_fold"/>
</dbReference>
<dbReference type="NCBIfam" id="TIGR01510">
    <property type="entry name" value="coaD_prev_kdtB"/>
    <property type="match status" value="1"/>
</dbReference>
<dbReference type="NCBIfam" id="TIGR00125">
    <property type="entry name" value="cyt_tran_rel"/>
    <property type="match status" value="1"/>
</dbReference>
<dbReference type="PANTHER" id="PTHR21342">
    <property type="entry name" value="PHOSPHOPANTETHEINE ADENYLYLTRANSFERASE"/>
    <property type="match status" value="1"/>
</dbReference>
<dbReference type="PANTHER" id="PTHR21342:SF1">
    <property type="entry name" value="PHOSPHOPANTETHEINE ADENYLYLTRANSFERASE"/>
    <property type="match status" value="1"/>
</dbReference>
<dbReference type="Pfam" id="PF01467">
    <property type="entry name" value="CTP_transf_like"/>
    <property type="match status" value="1"/>
</dbReference>
<dbReference type="PRINTS" id="PR01020">
    <property type="entry name" value="LPSBIOSNTHSS"/>
</dbReference>
<dbReference type="SUPFAM" id="SSF52374">
    <property type="entry name" value="Nucleotidylyl transferase"/>
    <property type="match status" value="1"/>
</dbReference>
<evidence type="ECO:0000255" key="1">
    <source>
        <dbReference type="HAMAP-Rule" id="MF_00151"/>
    </source>
</evidence>
<reference key="1">
    <citation type="submission" date="2008-05" db="EMBL/GenBank/DDBJ databases">
        <title>Complete sequence of chromosome 1 of Ralstonia pickettii 12J.</title>
        <authorList>
            <person name="Lucas S."/>
            <person name="Copeland A."/>
            <person name="Lapidus A."/>
            <person name="Glavina del Rio T."/>
            <person name="Dalin E."/>
            <person name="Tice H."/>
            <person name="Bruce D."/>
            <person name="Goodwin L."/>
            <person name="Pitluck S."/>
            <person name="Meincke L."/>
            <person name="Brettin T."/>
            <person name="Detter J.C."/>
            <person name="Han C."/>
            <person name="Kuske C.R."/>
            <person name="Schmutz J."/>
            <person name="Larimer F."/>
            <person name="Land M."/>
            <person name="Hauser L."/>
            <person name="Kyrpides N."/>
            <person name="Mikhailova N."/>
            <person name="Marsh T."/>
            <person name="Richardson P."/>
        </authorList>
    </citation>
    <scope>NUCLEOTIDE SEQUENCE [LARGE SCALE GENOMIC DNA]</scope>
    <source>
        <strain>12J</strain>
    </source>
</reference>
<comment type="function">
    <text evidence="1">Reversibly transfers an adenylyl group from ATP to 4'-phosphopantetheine, yielding dephospho-CoA (dPCoA) and pyrophosphate.</text>
</comment>
<comment type="catalytic activity">
    <reaction evidence="1">
        <text>(R)-4'-phosphopantetheine + ATP + H(+) = 3'-dephospho-CoA + diphosphate</text>
        <dbReference type="Rhea" id="RHEA:19801"/>
        <dbReference type="ChEBI" id="CHEBI:15378"/>
        <dbReference type="ChEBI" id="CHEBI:30616"/>
        <dbReference type="ChEBI" id="CHEBI:33019"/>
        <dbReference type="ChEBI" id="CHEBI:57328"/>
        <dbReference type="ChEBI" id="CHEBI:61723"/>
        <dbReference type="EC" id="2.7.7.3"/>
    </reaction>
</comment>
<comment type="cofactor">
    <cofactor evidence="1">
        <name>Mg(2+)</name>
        <dbReference type="ChEBI" id="CHEBI:18420"/>
    </cofactor>
</comment>
<comment type="pathway">
    <text evidence="1">Cofactor biosynthesis; coenzyme A biosynthesis; CoA from (R)-pantothenate: step 4/5.</text>
</comment>
<comment type="subunit">
    <text evidence="1">Homohexamer.</text>
</comment>
<comment type="subcellular location">
    <subcellularLocation>
        <location evidence="1">Cytoplasm</location>
    </subcellularLocation>
</comment>
<comment type="similarity">
    <text evidence="1">Belongs to the bacterial CoaD family.</text>
</comment>
<keyword id="KW-0067">ATP-binding</keyword>
<keyword id="KW-0173">Coenzyme A biosynthesis</keyword>
<keyword id="KW-0963">Cytoplasm</keyword>
<keyword id="KW-0460">Magnesium</keyword>
<keyword id="KW-0547">Nucleotide-binding</keyword>
<keyword id="KW-0548">Nucleotidyltransferase</keyword>
<keyword id="KW-0808">Transferase</keyword>
<feature type="chain" id="PRO_1000096827" description="Phosphopantetheine adenylyltransferase">
    <location>
        <begin position="1"/>
        <end position="167"/>
    </location>
</feature>
<feature type="binding site" evidence="1">
    <location>
        <begin position="9"/>
        <end position="10"/>
    </location>
    <ligand>
        <name>ATP</name>
        <dbReference type="ChEBI" id="CHEBI:30616"/>
    </ligand>
</feature>
<feature type="binding site" evidence="1">
    <location>
        <position position="9"/>
    </location>
    <ligand>
        <name>substrate</name>
    </ligand>
</feature>
<feature type="binding site" evidence="1">
    <location>
        <position position="17"/>
    </location>
    <ligand>
        <name>ATP</name>
        <dbReference type="ChEBI" id="CHEBI:30616"/>
    </ligand>
</feature>
<feature type="binding site" evidence="1">
    <location>
        <position position="41"/>
    </location>
    <ligand>
        <name>substrate</name>
    </ligand>
</feature>
<feature type="binding site" evidence="1">
    <location>
        <position position="73"/>
    </location>
    <ligand>
        <name>substrate</name>
    </ligand>
</feature>
<feature type="binding site" evidence="1">
    <location>
        <position position="87"/>
    </location>
    <ligand>
        <name>substrate</name>
    </ligand>
</feature>
<feature type="binding site" evidence="1">
    <location>
        <begin position="88"/>
        <end position="90"/>
    </location>
    <ligand>
        <name>ATP</name>
        <dbReference type="ChEBI" id="CHEBI:30616"/>
    </ligand>
</feature>
<feature type="binding site" evidence="1">
    <location>
        <position position="98"/>
    </location>
    <ligand>
        <name>ATP</name>
        <dbReference type="ChEBI" id="CHEBI:30616"/>
    </ligand>
</feature>
<feature type="binding site" evidence="1">
    <location>
        <begin position="123"/>
        <end position="129"/>
    </location>
    <ligand>
        <name>ATP</name>
        <dbReference type="ChEBI" id="CHEBI:30616"/>
    </ligand>
</feature>
<feature type="site" description="Transition state stabilizer" evidence="1">
    <location>
        <position position="17"/>
    </location>
</feature>
<organism>
    <name type="scientific">Ralstonia pickettii (strain 12J)</name>
    <dbReference type="NCBI Taxonomy" id="402626"/>
    <lineage>
        <taxon>Bacteria</taxon>
        <taxon>Pseudomonadati</taxon>
        <taxon>Pseudomonadota</taxon>
        <taxon>Betaproteobacteria</taxon>
        <taxon>Burkholderiales</taxon>
        <taxon>Burkholderiaceae</taxon>
        <taxon>Ralstonia</taxon>
    </lineage>
</organism>
<proteinExistence type="inferred from homology"/>
<gene>
    <name evidence="1" type="primary">coaD</name>
    <name type="ordered locus">Rpic_0245</name>
</gene>
<name>COAD_RALPJ</name>
<protein>
    <recommendedName>
        <fullName evidence="1">Phosphopantetheine adenylyltransferase</fullName>
        <ecNumber evidence="1">2.7.7.3</ecNumber>
    </recommendedName>
    <alternativeName>
        <fullName evidence="1">Dephospho-CoA pyrophosphorylase</fullName>
    </alternativeName>
    <alternativeName>
        <fullName evidence="1">Pantetheine-phosphate adenylyltransferase</fullName>
        <shortName evidence="1">PPAT</shortName>
    </alternativeName>
</protein>